<name>TNF18_MOUSE</name>
<reference key="1">
    <citation type="journal article" date="2003" name="Biochem. Biophys. Res. Commun.">
        <title>Identification of a ligand for glucocorticoid-induced tumor necrosis factor receptor constitutively expressed in dendritic cells.</title>
        <authorList>
            <person name="Yu K.Y."/>
            <person name="Kim H.S."/>
            <person name="Song S.Y."/>
            <person name="Min S.S."/>
            <person name="Jeong J.J."/>
            <person name="Youn B.S."/>
        </authorList>
    </citation>
    <scope>NUCLEOTIDE SEQUENCE [MRNA]</scope>
    <scope>FUNCTION</scope>
    <scope>SUBCELLULAR LOCATION</scope>
    <scope>TISSUE SPECIFICITY</scope>
    <source>
        <strain>129/J</strain>
    </source>
</reference>
<reference key="2">
    <citation type="journal article" date="2003" name="Genes Immun.">
        <title>Cloning and characterization of GITR ligand.</title>
        <authorList>
            <person name="Kim J.D."/>
            <person name="Choi B.K."/>
            <person name="Bae J.S."/>
            <person name="Lee U.H."/>
            <person name="Han I.S."/>
            <person name="Lee H.W."/>
            <person name="Youn B.S."/>
            <person name="Vinay D.S."/>
            <person name="Kwon B.S."/>
        </authorList>
    </citation>
    <scope>NUCLEOTIDE SEQUENCE [MRNA]</scope>
    <scope>FUNCTION</scope>
    <scope>TISSUE SPECIFICITY</scope>
    <source>
        <strain>BALB/cJ</strain>
    </source>
</reference>
<reference key="3">
    <citation type="journal article" date="2003" name="Proc. Natl. Acad. Sci. U.S.A.">
        <title>Mouse glucocorticoid-induced tumor necrosis factor receptor ligand is costimulatory for T cells.</title>
        <authorList>
            <person name="Tone M."/>
            <person name="Tone Y."/>
            <person name="Adams E."/>
            <person name="Yates S.F."/>
            <person name="Frewin M.R."/>
            <person name="Cobbold S.P."/>
            <person name="Waldmann H."/>
        </authorList>
    </citation>
    <scope>NUCLEOTIDE SEQUENCE [MRNA]</scope>
    <scope>FUNCTION</scope>
    <scope>SUBCELLULAR LOCATION</scope>
    <scope>INDUCTION</scope>
    <scope>TISSUE SPECIFICITY</scope>
    <source>
        <strain>CBA/CaJ</strain>
    </source>
</reference>
<reference key="4">
    <citation type="journal article" date="2004" name="J. Immunol.">
        <title>The natural ligand for glucocorticoid-induced TNF receptor-related protein abrogates regulatory T cell suppression.</title>
        <authorList>
            <person name="Ji H.B."/>
            <person name="Liao G."/>
            <person name="Faubion W.A."/>
            <person name="Abadia-Molina A.C."/>
            <person name="Cozzo C."/>
            <person name="Laroux F.S."/>
            <person name="Caton A."/>
            <person name="Terhorst C."/>
        </authorList>
    </citation>
    <scope>NUCLEOTIDE SEQUENCE [MRNA]</scope>
    <scope>FUNCTION</scope>
    <scope>SUBUNIT</scope>
    <source>
        <strain>C57BL/6J</strain>
        <tissue>Spleen</tissue>
    </source>
</reference>
<reference key="5">
    <citation type="submission" date="2003-02" db="EMBL/GenBank/DDBJ databases">
        <title>Cloning and characterization of the mouse ortholog of human GITR ligand (TNFSF18).</title>
        <authorList>
            <person name="Bianchini R."/>
            <person name="Nocentini G."/>
            <person name="Ronchetti S."/>
            <person name="Ayroldi E."/>
            <person name="Riccardi C."/>
        </authorList>
    </citation>
    <scope>NUCLEOTIDE SEQUENCE [MRNA]</scope>
    <source>
        <strain>DBA/2J</strain>
    </source>
</reference>
<reference key="6">
    <citation type="journal article" date="2009" name="PLoS Biol.">
        <title>Lineage-specific biology revealed by a finished genome assembly of the mouse.</title>
        <authorList>
            <person name="Church D.M."/>
            <person name="Goodstadt L."/>
            <person name="Hillier L.W."/>
            <person name="Zody M.C."/>
            <person name="Goldstein S."/>
            <person name="She X."/>
            <person name="Bult C.J."/>
            <person name="Agarwala R."/>
            <person name="Cherry J.L."/>
            <person name="DiCuccio M."/>
            <person name="Hlavina W."/>
            <person name="Kapustin Y."/>
            <person name="Meric P."/>
            <person name="Maglott D."/>
            <person name="Birtle Z."/>
            <person name="Marques A.C."/>
            <person name="Graves T."/>
            <person name="Zhou S."/>
            <person name="Teague B."/>
            <person name="Potamousis K."/>
            <person name="Churas C."/>
            <person name="Place M."/>
            <person name="Herschleb J."/>
            <person name="Runnheim R."/>
            <person name="Forrest D."/>
            <person name="Amos-Landgraf J."/>
            <person name="Schwartz D.C."/>
            <person name="Cheng Z."/>
            <person name="Lindblad-Toh K."/>
            <person name="Eichler E.E."/>
            <person name="Ponting C.P."/>
        </authorList>
    </citation>
    <scope>NUCLEOTIDE SEQUENCE [LARGE SCALE GENOMIC DNA]</scope>
    <source>
        <strain>C57BL/6J</strain>
    </source>
</reference>
<reference key="7">
    <citation type="journal article" date="2004" name="Genome Res.">
        <title>The status, quality, and expansion of the NIH full-length cDNA project: the Mammalian Gene Collection (MGC).</title>
        <authorList>
            <consortium name="The MGC Project Team"/>
        </authorList>
    </citation>
    <scope>NUCLEOTIDE SEQUENCE [LARGE SCALE MRNA]</scope>
    <source>
        <tissue>Brain</tissue>
    </source>
</reference>
<reference key="8">
    <citation type="journal article" date="2013" name="J. Pharmacol. Exp. Ther.">
        <title>Glucocorticoid-induced tumor necrosis factor receptor family-related ligand triggering upregulates vascular cell adhesion molecule-1 and intercellular adhesion molecule-1 and promotes leukocyte adhesion.</title>
        <authorList>
            <person name="Lacal P.M."/>
            <person name="Petrillo M.G."/>
            <person name="Ruffini F."/>
            <person name="Muzi A."/>
            <person name="Bianchini R."/>
            <person name="Ronchetti S."/>
            <person name="Migliorati G."/>
            <person name="Riccardi C."/>
            <person name="Graziani G."/>
            <person name="Nocentini G."/>
        </authorList>
    </citation>
    <scope>FUNCTION</scope>
</reference>
<reference key="9">
    <citation type="journal article" date="2014" name="FASEB J.">
        <title>Glucocorticoid-induced TNF receptor family-related protein ligand regulates the migration of monocytes to the inflamed intestine.</title>
        <authorList>
            <person name="Liao G."/>
            <person name="van Driel B."/>
            <person name="Magelky E."/>
            <person name="O'Keeffe M.S."/>
            <person name="de Waal Malefyt R."/>
            <person name="Engel P."/>
            <person name="Herzog R.W."/>
            <person name="Mizoguchi E."/>
            <person name="Bhan A.K."/>
            <person name="Terhorst C."/>
        </authorList>
    </citation>
    <scope>FUNCTION</scope>
    <scope>DISRUPTION PHENOTYPE</scope>
</reference>
<reference key="10">
    <citation type="journal article" date="2008" name="Proc. Natl. Acad. Sci. U.S.A.">
        <title>Evolution of GITRL immune function: murine GITRL exhibits unique structural and biochemical properties within the TNF superfamily.</title>
        <authorList>
            <person name="Chattopadhyay K."/>
            <person name="Ramagopal U.A."/>
            <person name="Brenowitz M."/>
            <person name="Nathenson S.G."/>
            <person name="Almo S.C."/>
        </authorList>
    </citation>
    <scope>X-RAY CRYSTALLOGRAPHY (2.09 ANGSTROMS) OF 46-173</scope>
    <scope>SUBUNIT</scope>
    <scope>DISULFIDE BOND</scope>
</reference>
<reference key="11">
    <citation type="journal article" date="2008" name="Proc. Natl. Acad. Sci. U.S.A.">
        <title>Structural basis for ligand-mediated mouse GITR activation.</title>
        <authorList>
            <person name="Zhou Z."/>
            <person name="Tone Y."/>
            <person name="Song X."/>
            <person name="Furuuchi K."/>
            <person name="Lear J.D."/>
            <person name="Waldmann H."/>
            <person name="Tone M."/>
            <person name="Greene M.I."/>
            <person name="Murali R."/>
        </authorList>
    </citation>
    <scope>X-RAY CRYSTALLOGRAPHY (1.75 ANGSTROMS) OF 43-173</scope>
    <scope>FUNCTION</scope>
    <scope>SUBUNIT</scope>
    <scope>DISULFIDE BOND</scope>
</reference>
<reference key="12">
    <citation type="journal article" date="2009" name="Acta Crystallogr. D">
        <title>1.8 A structure of murine GITR ligand dimer expressed in Drosophila melanogaster S2 cells.</title>
        <authorList>
            <person name="Chattopadhyay K."/>
            <person name="Ramagopal U.A."/>
            <person name="Nathenson S.G."/>
            <person name="Almo S.C."/>
        </authorList>
    </citation>
    <scope>X-RAY CRYSTALLOGRAPHY (1.76 ANGSTROMS) OF 46-173</scope>
    <scope>GLYCOSYLATION</scope>
    <scope>SUBUNIT</scope>
    <scope>DISULFIDE BOND</scope>
</reference>
<dbReference type="EMBL" id="AY359852">
    <property type="protein sequence ID" value="AAQ55265.1"/>
    <property type="molecule type" value="mRNA"/>
</dbReference>
<dbReference type="EMBL" id="AY267900">
    <property type="protein sequence ID" value="AAP96745.1"/>
    <property type="molecule type" value="mRNA"/>
</dbReference>
<dbReference type="EMBL" id="AJ577579">
    <property type="protein sequence ID" value="CAE12166.1"/>
    <property type="molecule type" value="mRNA"/>
</dbReference>
<dbReference type="EMBL" id="AJ577580">
    <property type="protein sequence ID" value="CAE12167.1"/>
    <property type="molecule type" value="mRNA"/>
</dbReference>
<dbReference type="EMBL" id="AY320040">
    <property type="protein sequence ID" value="AAP70494.1"/>
    <property type="molecule type" value="mRNA"/>
</dbReference>
<dbReference type="EMBL" id="AY234223">
    <property type="protein sequence ID" value="AAO89011.1"/>
    <property type="molecule type" value="mRNA"/>
</dbReference>
<dbReference type="EMBL" id="AC163268">
    <property type="status" value="NOT_ANNOTATED_CDS"/>
    <property type="molecule type" value="Genomic_DNA"/>
</dbReference>
<dbReference type="EMBL" id="BC137814">
    <property type="protein sequence ID" value="AAI37815.1"/>
    <property type="molecule type" value="mRNA"/>
</dbReference>
<dbReference type="EMBL" id="BC137815">
    <property type="protein sequence ID" value="AAI37816.1"/>
    <property type="molecule type" value="mRNA"/>
</dbReference>
<dbReference type="CCDS" id="CCDS15417.1"/>
<dbReference type="RefSeq" id="NP_899247.3">
    <property type="nucleotide sequence ID" value="NM_183391.3"/>
</dbReference>
<dbReference type="PDB" id="2Q8O">
    <property type="method" value="X-ray"/>
    <property type="resolution" value="1.75 A"/>
    <property type="chains" value="A/B=43-173"/>
</dbReference>
<dbReference type="PDB" id="2QDN">
    <property type="method" value="X-ray"/>
    <property type="resolution" value="2.09 A"/>
    <property type="chains" value="A/B=46-173"/>
</dbReference>
<dbReference type="PDB" id="3B9I">
    <property type="method" value="X-ray"/>
    <property type="resolution" value="2.49 A"/>
    <property type="chains" value="A/B=46-173"/>
</dbReference>
<dbReference type="PDB" id="3FC0">
    <property type="method" value="X-ray"/>
    <property type="resolution" value="1.76 A"/>
    <property type="chains" value="A/B=46-173"/>
</dbReference>
<dbReference type="PDB" id="7E57">
    <property type="method" value="X-ray"/>
    <property type="resolution" value="3.30 A"/>
    <property type="chains" value="A/B=1-173"/>
</dbReference>
<dbReference type="PDB" id="7KHX">
    <property type="method" value="X-ray"/>
    <property type="resolution" value="3.21 A"/>
    <property type="chains" value="A/B=42-173"/>
</dbReference>
<dbReference type="PDBsum" id="2Q8O"/>
<dbReference type="PDBsum" id="2QDN"/>
<dbReference type="PDBsum" id="3B9I"/>
<dbReference type="PDBsum" id="3FC0"/>
<dbReference type="PDBsum" id="7E57"/>
<dbReference type="PDBsum" id="7KHX"/>
<dbReference type="SMR" id="Q7TS55"/>
<dbReference type="DIP" id="DIP-29663N"/>
<dbReference type="FunCoup" id="Q7TS55">
    <property type="interactions" value="299"/>
</dbReference>
<dbReference type="IntAct" id="Q7TS55">
    <property type="interactions" value="1"/>
</dbReference>
<dbReference type="STRING" id="10090.ENSMUSP00000083251"/>
<dbReference type="GlyCosmos" id="Q7TS55">
    <property type="glycosylation" value="1 site, No reported glycans"/>
</dbReference>
<dbReference type="GlyGen" id="Q7TS55">
    <property type="glycosylation" value="1 site"/>
</dbReference>
<dbReference type="PaxDb" id="10090-ENSMUSP00000083251"/>
<dbReference type="Antibodypedia" id="2126">
    <property type="antibodies" value="617 antibodies from 38 providers"/>
</dbReference>
<dbReference type="DNASU" id="240873"/>
<dbReference type="Ensembl" id="ENSMUST00000086084.2">
    <property type="protein sequence ID" value="ENSMUSP00000083251.2"/>
    <property type="gene ID" value="ENSMUSG00000066755.3"/>
</dbReference>
<dbReference type="GeneID" id="240873"/>
<dbReference type="KEGG" id="mmu:240873"/>
<dbReference type="UCSC" id="uc007dfo.2">
    <property type="organism name" value="mouse"/>
</dbReference>
<dbReference type="AGR" id="MGI:2673064"/>
<dbReference type="CTD" id="8995"/>
<dbReference type="MGI" id="MGI:2673064">
    <property type="gene designation" value="Tnfsf18"/>
</dbReference>
<dbReference type="VEuPathDB" id="HostDB:ENSMUSG00000066755"/>
<dbReference type="eggNOG" id="ENOG502SWIC">
    <property type="taxonomic scope" value="Eukaryota"/>
</dbReference>
<dbReference type="GeneTree" id="ENSGT00390000002560"/>
<dbReference type="HOGENOM" id="CLU_134507_0_0_1"/>
<dbReference type="InParanoid" id="Q7TS55"/>
<dbReference type="OMA" id="YKEPAPF"/>
<dbReference type="OrthoDB" id="9096520at2759"/>
<dbReference type="PhylomeDB" id="Q7TS55"/>
<dbReference type="TreeFam" id="TF338614"/>
<dbReference type="Reactome" id="R-MMU-5669034">
    <property type="pathway name" value="TNFs bind their physiological receptors"/>
</dbReference>
<dbReference type="BioGRID-ORCS" id="240873">
    <property type="hits" value="1 hit in 76 CRISPR screens"/>
</dbReference>
<dbReference type="EvolutionaryTrace" id="Q7TS55"/>
<dbReference type="PRO" id="PR:Q7TS55"/>
<dbReference type="Proteomes" id="UP000000589">
    <property type="component" value="Chromosome 1"/>
</dbReference>
<dbReference type="RNAct" id="Q7TS55">
    <property type="molecule type" value="protein"/>
</dbReference>
<dbReference type="Bgee" id="ENSMUSG00000066755">
    <property type="expression patterns" value="Expressed in mesodermal cell in embryo and 5 other cell types or tissues"/>
</dbReference>
<dbReference type="GO" id="GO:0009986">
    <property type="term" value="C:cell surface"/>
    <property type="evidence" value="ECO:0000314"/>
    <property type="project" value="UniProtKB"/>
</dbReference>
<dbReference type="GO" id="GO:0005615">
    <property type="term" value="C:extracellular space"/>
    <property type="evidence" value="ECO:0007669"/>
    <property type="project" value="UniProtKB-KW"/>
</dbReference>
<dbReference type="GO" id="GO:0005886">
    <property type="term" value="C:plasma membrane"/>
    <property type="evidence" value="ECO:0007669"/>
    <property type="project" value="UniProtKB-SubCell"/>
</dbReference>
<dbReference type="GO" id="GO:0005125">
    <property type="term" value="F:cytokine activity"/>
    <property type="evidence" value="ECO:0007669"/>
    <property type="project" value="UniProtKB-KW"/>
</dbReference>
<dbReference type="GO" id="GO:0042802">
    <property type="term" value="F:identical protein binding"/>
    <property type="evidence" value="ECO:0000353"/>
    <property type="project" value="IntAct"/>
</dbReference>
<dbReference type="GO" id="GO:0005164">
    <property type="term" value="F:tumor necrosis factor receptor binding"/>
    <property type="evidence" value="ECO:0007669"/>
    <property type="project" value="InterPro"/>
</dbReference>
<dbReference type="GO" id="GO:0032813">
    <property type="term" value="F:tumor necrosis factor receptor superfamily binding"/>
    <property type="evidence" value="ECO:0000314"/>
    <property type="project" value="UniProtKB"/>
</dbReference>
<dbReference type="GO" id="GO:0002250">
    <property type="term" value="P:adaptive immune response"/>
    <property type="evidence" value="ECO:0007669"/>
    <property type="project" value="UniProtKB-KW"/>
</dbReference>
<dbReference type="GO" id="GO:2000329">
    <property type="term" value="P:negative regulation of T-helper 17 cell lineage commitment"/>
    <property type="evidence" value="ECO:0000315"/>
    <property type="project" value="UniProtKB"/>
</dbReference>
<dbReference type="GO" id="GO:0045785">
    <property type="term" value="P:positive regulation of cell adhesion"/>
    <property type="evidence" value="ECO:0000315"/>
    <property type="project" value="UniProtKB"/>
</dbReference>
<dbReference type="GO" id="GO:0050729">
    <property type="term" value="P:positive regulation of inflammatory response"/>
    <property type="evidence" value="ECO:0000315"/>
    <property type="project" value="UniProtKB"/>
</dbReference>
<dbReference type="GO" id="GO:0010759">
    <property type="term" value="P:positive regulation of macrophage chemotaxis"/>
    <property type="evidence" value="ECO:0000315"/>
    <property type="project" value="UniProtKB"/>
</dbReference>
<dbReference type="GO" id="GO:0090026">
    <property type="term" value="P:positive regulation of monocyte chemotaxis"/>
    <property type="evidence" value="ECO:0000315"/>
    <property type="project" value="UniProtKB"/>
</dbReference>
<dbReference type="GO" id="GO:0051092">
    <property type="term" value="P:positive regulation of NF-kappaB transcription factor activity"/>
    <property type="evidence" value="ECO:0000315"/>
    <property type="project" value="UniProtKB"/>
</dbReference>
<dbReference type="GO" id="GO:2000508">
    <property type="term" value="P:regulation of dendritic cell chemotaxis"/>
    <property type="evidence" value="ECO:0000315"/>
    <property type="project" value="UniProtKB"/>
</dbReference>
<dbReference type="GO" id="GO:0043254">
    <property type="term" value="P:regulation of protein-containing complex assembly"/>
    <property type="evidence" value="ECO:0000315"/>
    <property type="project" value="UniProtKB"/>
</dbReference>
<dbReference type="GO" id="GO:0042129">
    <property type="term" value="P:regulation of T cell proliferation"/>
    <property type="evidence" value="ECO:0000314"/>
    <property type="project" value="UniProtKB"/>
</dbReference>
<dbReference type="GO" id="GO:0002309">
    <property type="term" value="P:T cell proliferation involved in immune response"/>
    <property type="evidence" value="ECO:0000314"/>
    <property type="project" value="UniProtKB"/>
</dbReference>
<dbReference type="GO" id="GO:0033209">
    <property type="term" value="P:tumor necrosis factor-mediated signaling pathway"/>
    <property type="evidence" value="ECO:0000315"/>
    <property type="project" value="UniProtKB"/>
</dbReference>
<dbReference type="FunFam" id="2.60.120.40:FF:000026">
    <property type="entry name" value="Tumor necrosis factor ligand superfamily member 18"/>
    <property type="match status" value="1"/>
</dbReference>
<dbReference type="Gene3D" id="2.60.120.40">
    <property type="match status" value="1"/>
</dbReference>
<dbReference type="InterPro" id="IPR006052">
    <property type="entry name" value="TNF_dom"/>
</dbReference>
<dbReference type="InterPro" id="IPR042380">
    <property type="entry name" value="TNFSF18"/>
</dbReference>
<dbReference type="InterPro" id="IPR008983">
    <property type="entry name" value="Tumour_necrosis_fac-like_dom"/>
</dbReference>
<dbReference type="PANTHER" id="PTHR15267">
    <property type="entry name" value="TUMOR NECROSIS FACTOR LIGAND SUPERFAMILY MEMBER 18"/>
    <property type="match status" value="1"/>
</dbReference>
<dbReference type="PANTHER" id="PTHR15267:SF1">
    <property type="entry name" value="TUMOR NECROSIS FACTOR LIGAND SUPERFAMILY MEMBER 18"/>
    <property type="match status" value="1"/>
</dbReference>
<dbReference type="Pfam" id="PF00229">
    <property type="entry name" value="TNF"/>
    <property type="match status" value="1"/>
</dbReference>
<dbReference type="SUPFAM" id="SSF49842">
    <property type="entry name" value="TNF-like"/>
    <property type="match status" value="1"/>
</dbReference>
<dbReference type="PROSITE" id="PS50049">
    <property type="entry name" value="THD_2"/>
    <property type="match status" value="1"/>
</dbReference>
<proteinExistence type="evidence at protein level"/>
<accession>Q7TS55</accession>
<accession>Q7TNY2</accession>
<accession>Q80YG2</accession>
<keyword id="KW-0002">3D-structure</keyword>
<keyword id="KW-1064">Adaptive immunity</keyword>
<keyword id="KW-1003">Cell membrane</keyword>
<keyword id="KW-0202">Cytokine</keyword>
<keyword id="KW-1015">Disulfide bond</keyword>
<keyword id="KW-0325">Glycoprotein</keyword>
<keyword id="KW-0391">Immunity</keyword>
<keyword id="KW-0472">Membrane</keyword>
<keyword id="KW-1185">Reference proteome</keyword>
<keyword id="KW-0735">Signal-anchor</keyword>
<keyword id="KW-0812">Transmembrane</keyword>
<keyword id="KW-1133">Transmembrane helix</keyword>
<protein>
    <recommendedName>
        <fullName>Tumor necrosis factor ligand superfamily member 18</fullName>
    </recommendedName>
    <alternativeName>
        <fullName>GITR ligand</fullName>
        <shortName>GITRL</shortName>
    </alternativeName>
    <alternativeName>
        <fullName>Glucocorticoid-induced TNF-related ligand</fullName>
    </alternativeName>
</protein>
<comment type="function">
    <text evidence="1 4 5 6 7 8 11 12">Cytokine that binds to TNFRSF18/AITR/GITR (PubMed:14521928, PubMed:14647196). Regulates T-cell responses (PubMed:14647196). Can function as costimulator and lower the threshold for T-cell activation and T-cell proliferation (PubMed:14608036, PubMed:15128759). Important for interactions between activated T-lymphocytes and endothelial cells. Mediates activation of NF-kappa-B (PubMed:14521928, PubMed:14647196, PubMed:18178614). Triggers increased phosphorylation of STAT1 and up-regulates expression of VCAM1 and ICAM1 (By similarity). Promotes leukocyte adhesion to endothelial cells (PubMed:23892569). Regulates migration of monocytes from the splenic reservoir to sites of inflammation (PubMed:24107315).</text>
</comment>
<comment type="subunit">
    <text evidence="7 8 9 10">Homotrimer. Homodimer.</text>
</comment>
<comment type="interaction">
    <interactant intactId="EBI-523345">
        <id>Q7TS55</id>
    </interactant>
    <interactant intactId="EBI-523358">
        <id>O35714</id>
        <label>Tnfrsf18</label>
    </interactant>
    <organismsDiffer>false</organismsDiffer>
    <experiments>4</experiments>
</comment>
<comment type="interaction">
    <interactant intactId="EBI-523345">
        <id>Q7TS55</id>
    </interactant>
    <interactant intactId="EBI-523345">
        <id>Q7TS55</id>
        <label>Tnfsf18</label>
    </interactant>
    <organismsDiffer>false</organismsDiffer>
    <experiments>4</experiments>
</comment>
<comment type="subcellular location">
    <subcellularLocation>
        <location evidence="4 5">Cell membrane</location>
        <topology evidence="4 5">Single-pass type II membrane protein</topology>
    </subcellularLocation>
</comment>
<comment type="tissue specificity">
    <text evidence="4 5 6">Detected in immature and mature dendritic cells and in macrophages (at protein level). Detected in spleen, lung, heart, thymus, monocytes, macrophages, B-cells and dendritic cells.</text>
</comment>
<comment type="induction">
    <text evidence="5">Up-regulated by exposure to bacterial lipopolysaccharide (LPS).</text>
</comment>
<comment type="PTM">
    <text evidence="10">N-glycosylated.</text>
</comment>
<comment type="disruption phenotype">
    <text evidence="12">Reduced levels of pro-inflammatory macrophages in the peritoneal cavity following injection with thioglycollate broth to induce peritonitis and reduced AGTR1 levels in spleen macrophages.</text>
</comment>
<comment type="similarity">
    <text evidence="13">Belongs to the tumor necrosis factor family.</text>
</comment>
<sequence>MEEMPLRESSPQRAERCKKSWLLCIVALLLMLLCSLGTLIYTSLKPTAIESCMVKFELSSSKWHMTSPKPHCVNTTSDGKLKILQSGTYLIYGQVIPVDKKYIKDNAPFVVQIYKKNDVLQTLMNDFQILPIGGVYELHAGDNIYLKFNSKDHIQKTNTYWGIILMPDLPFIS</sequence>
<organism>
    <name type="scientific">Mus musculus</name>
    <name type="common">Mouse</name>
    <dbReference type="NCBI Taxonomy" id="10090"/>
    <lineage>
        <taxon>Eukaryota</taxon>
        <taxon>Metazoa</taxon>
        <taxon>Chordata</taxon>
        <taxon>Craniata</taxon>
        <taxon>Vertebrata</taxon>
        <taxon>Euteleostomi</taxon>
        <taxon>Mammalia</taxon>
        <taxon>Eutheria</taxon>
        <taxon>Euarchontoglires</taxon>
        <taxon>Glires</taxon>
        <taxon>Rodentia</taxon>
        <taxon>Myomorpha</taxon>
        <taxon>Muroidea</taxon>
        <taxon>Muridae</taxon>
        <taxon>Murinae</taxon>
        <taxon>Mus</taxon>
        <taxon>Mus</taxon>
    </lineage>
</organism>
<evidence type="ECO:0000250" key="1">
    <source>
        <dbReference type="UniProtKB" id="Q9UNG2"/>
    </source>
</evidence>
<evidence type="ECO:0000255" key="2"/>
<evidence type="ECO:0000255" key="3">
    <source>
        <dbReference type="PROSITE-ProRule" id="PRU01387"/>
    </source>
</evidence>
<evidence type="ECO:0000269" key="4">
    <source>
    </source>
</evidence>
<evidence type="ECO:0000269" key="5">
    <source>
    </source>
</evidence>
<evidence type="ECO:0000269" key="6">
    <source>
    </source>
</evidence>
<evidence type="ECO:0000269" key="7">
    <source>
    </source>
</evidence>
<evidence type="ECO:0000269" key="8">
    <source>
    </source>
</evidence>
<evidence type="ECO:0000269" key="9">
    <source>
    </source>
</evidence>
<evidence type="ECO:0000269" key="10">
    <source>
    </source>
</evidence>
<evidence type="ECO:0000269" key="11">
    <source>
    </source>
</evidence>
<evidence type="ECO:0000269" key="12">
    <source>
    </source>
</evidence>
<evidence type="ECO:0000305" key="13"/>
<evidence type="ECO:0007829" key="14">
    <source>
        <dbReference type="PDB" id="2Q8O"/>
    </source>
</evidence>
<evidence type="ECO:0007829" key="15">
    <source>
        <dbReference type="PDB" id="3FC0"/>
    </source>
</evidence>
<gene>
    <name type="primary">Tnfsf18</name>
    <name type="synonym">Gitrl</name>
</gene>
<feature type="chain" id="PRO_0000415333" description="Tumor necrosis factor ligand superfamily member 18">
    <location>
        <begin position="1"/>
        <end position="173"/>
    </location>
</feature>
<feature type="topological domain" description="Cytoplasmic" evidence="2">
    <location>
        <begin position="1"/>
        <end position="20"/>
    </location>
</feature>
<feature type="transmembrane region" description="Helical; Signal-anchor for type II membrane protein" evidence="2">
    <location>
        <begin position="21"/>
        <end position="41"/>
    </location>
</feature>
<feature type="topological domain" description="Extracellular" evidence="2">
    <location>
        <begin position="42"/>
        <end position="173"/>
    </location>
</feature>
<feature type="domain" description="THD" evidence="3">
    <location>
        <begin position="40"/>
        <end position="166"/>
    </location>
</feature>
<feature type="glycosylation site" description="N-linked (GlcNAc...) asparagine" evidence="2">
    <location>
        <position position="74"/>
    </location>
</feature>
<feature type="disulfide bond" evidence="3 8 9 10">
    <location>
        <begin position="52"/>
        <end position="72"/>
    </location>
</feature>
<feature type="sequence conflict" description="In Ref. 2; AAP96745." evidence="13" ref="2">
    <original>A</original>
    <variation>V</variation>
    <location>
        <position position="48"/>
    </location>
</feature>
<feature type="sequence conflict" description="In Ref. 2; AAP96745, 3; CAE12166/CAE12167, 5; AAO89011 and 7; AAI37815." evidence="13" ref="2 3 5 7">
    <original>T</original>
    <variation>N</variation>
    <location>
        <position position="157"/>
    </location>
</feature>
<feature type="strand" evidence="14">
    <location>
        <begin position="53"/>
        <end position="57"/>
    </location>
</feature>
<feature type="turn" evidence="14">
    <location>
        <begin position="58"/>
        <end position="61"/>
    </location>
</feature>
<feature type="strand" evidence="14">
    <location>
        <begin position="62"/>
        <end position="69"/>
    </location>
</feature>
<feature type="strand" evidence="14">
    <location>
        <begin position="71"/>
        <end position="75"/>
    </location>
</feature>
<feature type="strand" evidence="14">
    <location>
        <begin position="81"/>
        <end position="83"/>
    </location>
</feature>
<feature type="strand" evidence="14">
    <location>
        <begin position="87"/>
        <end position="95"/>
    </location>
</feature>
<feature type="helix" evidence="14">
    <location>
        <begin position="100"/>
        <end position="102"/>
    </location>
</feature>
<feature type="strand" evidence="14">
    <location>
        <begin position="109"/>
        <end position="115"/>
    </location>
</feature>
<feature type="strand" evidence="14">
    <location>
        <begin position="118"/>
        <end position="127"/>
    </location>
</feature>
<feature type="strand" evidence="14">
    <location>
        <begin position="130"/>
        <end position="138"/>
    </location>
</feature>
<feature type="strand" evidence="14">
    <location>
        <begin position="143"/>
        <end position="149"/>
    </location>
</feature>
<feature type="helix" evidence="14">
    <location>
        <begin position="151"/>
        <end position="153"/>
    </location>
</feature>
<feature type="strand" evidence="14">
    <location>
        <begin position="160"/>
        <end position="165"/>
    </location>
</feature>
<feature type="strand" evidence="15">
    <location>
        <begin position="171"/>
        <end position="173"/>
    </location>
</feature>